<comment type="function">
    <text evidence="1">Methyltransferase required for the conversion of demethylmenaquinol (DMKH2) to menaquinol (MKH2).</text>
</comment>
<comment type="catalytic activity">
    <reaction evidence="1">
        <text>a 2-demethylmenaquinol + S-adenosyl-L-methionine = a menaquinol + S-adenosyl-L-homocysteine + H(+)</text>
        <dbReference type="Rhea" id="RHEA:42640"/>
        <dbReference type="Rhea" id="RHEA-COMP:9539"/>
        <dbReference type="Rhea" id="RHEA-COMP:9563"/>
        <dbReference type="ChEBI" id="CHEBI:15378"/>
        <dbReference type="ChEBI" id="CHEBI:18151"/>
        <dbReference type="ChEBI" id="CHEBI:55437"/>
        <dbReference type="ChEBI" id="CHEBI:57856"/>
        <dbReference type="ChEBI" id="CHEBI:59789"/>
        <dbReference type="EC" id="2.1.1.163"/>
    </reaction>
</comment>
<comment type="pathway">
    <text evidence="1">Quinol/quinone metabolism; menaquinone biosynthesis; menaquinol from 1,4-dihydroxy-2-naphthoate: step 2/2.</text>
</comment>
<comment type="similarity">
    <text evidence="1">Belongs to the class I-like SAM-binding methyltransferase superfamily. MenG/UbiE family.</text>
</comment>
<comment type="sequence caution" evidence="2">
    <conflict type="erroneous initiation">
        <sequence resource="EMBL-CDS" id="AAF39525"/>
    </conflict>
</comment>
<keyword id="KW-0474">Menaquinone biosynthesis</keyword>
<keyword id="KW-0489">Methyltransferase</keyword>
<keyword id="KW-0949">S-adenosyl-L-methionine</keyword>
<keyword id="KW-0808">Transferase</keyword>
<feature type="chain" id="PRO_0000193264" description="Demethylmenaquinone methyltransferase">
    <location>
        <begin position="1"/>
        <end position="229"/>
    </location>
</feature>
<feature type="binding site" evidence="1">
    <location>
        <position position="57"/>
    </location>
    <ligand>
        <name>S-adenosyl-L-methionine</name>
        <dbReference type="ChEBI" id="CHEBI:59789"/>
    </ligand>
</feature>
<feature type="binding site" evidence="1">
    <location>
        <position position="77"/>
    </location>
    <ligand>
        <name>S-adenosyl-L-methionine</name>
        <dbReference type="ChEBI" id="CHEBI:59789"/>
    </ligand>
</feature>
<feature type="binding site" evidence="1">
    <location>
        <begin position="101"/>
        <end position="102"/>
    </location>
    <ligand>
        <name>S-adenosyl-L-methionine</name>
        <dbReference type="ChEBI" id="CHEBI:59789"/>
    </ligand>
</feature>
<reference key="1">
    <citation type="journal article" date="2000" name="Nucleic Acids Res.">
        <title>Genome sequences of Chlamydia trachomatis MoPn and Chlamydia pneumoniae AR39.</title>
        <authorList>
            <person name="Read T.D."/>
            <person name="Brunham R.C."/>
            <person name="Shen C."/>
            <person name="Gill S.R."/>
            <person name="Heidelberg J.F."/>
            <person name="White O."/>
            <person name="Hickey E.K."/>
            <person name="Peterson J.D."/>
            <person name="Utterback T.R."/>
            <person name="Berry K.J."/>
            <person name="Bass S."/>
            <person name="Linher K.D."/>
            <person name="Weidman J.F."/>
            <person name="Khouri H.M."/>
            <person name="Craven B."/>
            <person name="Bowman C."/>
            <person name="Dodson R.J."/>
            <person name="Gwinn M.L."/>
            <person name="Nelson W.C."/>
            <person name="DeBoy R.T."/>
            <person name="Kolonay J.F."/>
            <person name="McClarty G."/>
            <person name="Salzberg S.L."/>
            <person name="Eisen J.A."/>
            <person name="Fraser C.M."/>
        </authorList>
    </citation>
    <scope>NUCLEOTIDE SEQUENCE [LARGE SCALE GENOMIC DNA]</scope>
    <source>
        <strain>MoPn / Nigg</strain>
    </source>
</reference>
<organism>
    <name type="scientific">Chlamydia muridarum (strain MoPn / Nigg)</name>
    <dbReference type="NCBI Taxonomy" id="243161"/>
    <lineage>
        <taxon>Bacteria</taxon>
        <taxon>Pseudomonadati</taxon>
        <taxon>Chlamydiota</taxon>
        <taxon>Chlamydiia</taxon>
        <taxon>Chlamydiales</taxon>
        <taxon>Chlamydiaceae</taxon>
        <taxon>Chlamydia/Chlamydophila group</taxon>
        <taxon>Chlamydia</taxon>
    </lineage>
</organism>
<gene>
    <name evidence="1" type="primary">menG</name>
    <name type="ordered locus">TC_0712</name>
</gene>
<accession>Q9PJW4</accession>
<dbReference type="EC" id="2.1.1.163" evidence="1"/>
<dbReference type="EMBL" id="AE002160">
    <property type="protein sequence ID" value="AAF39525.1"/>
    <property type="status" value="ALT_INIT"/>
    <property type="molecule type" value="Genomic_DNA"/>
</dbReference>
<dbReference type="PIR" id="H81674">
    <property type="entry name" value="H81674"/>
</dbReference>
<dbReference type="SMR" id="Q9PJW4"/>
<dbReference type="GeneID" id="1246075"/>
<dbReference type="KEGG" id="cmu:TC_0712"/>
<dbReference type="eggNOG" id="COG2226">
    <property type="taxonomic scope" value="Bacteria"/>
</dbReference>
<dbReference type="HOGENOM" id="CLU_037990_0_0_0"/>
<dbReference type="OrthoDB" id="9808140at2"/>
<dbReference type="UniPathway" id="UPA00079">
    <property type="reaction ID" value="UER00169"/>
</dbReference>
<dbReference type="Proteomes" id="UP000000800">
    <property type="component" value="Chromosome"/>
</dbReference>
<dbReference type="GO" id="GO:0043770">
    <property type="term" value="F:demethylmenaquinone methyltransferase activity"/>
    <property type="evidence" value="ECO:0007669"/>
    <property type="project" value="UniProtKB-UniRule"/>
</dbReference>
<dbReference type="GO" id="GO:0009234">
    <property type="term" value="P:menaquinone biosynthetic process"/>
    <property type="evidence" value="ECO:0007669"/>
    <property type="project" value="UniProtKB-UniRule"/>
</dbReference>
<dbReference type="GO" id="GO:0032259">
    <property type="term" value="P:methylation"/>
    <property type="evidence" value="ECO:0007669"/>
    <property type="project" value="UniProtKB-KW"/>
</dbReference>
<dbReference type="CDD" id="cd02440">
    <property type="entry name" value="AdoMet_MTases"/>
    <property type="match status" value="1"/>
</dbReference>
<dbReference type="Gene3D" id="3.40.50.150">
    <property type="entry name" value="Vaccinia Virus protein VP39"/>
    <property type="match status" value="1"/>
</dbReference>
<dbReference type="HAMAP" id="MF_01813">
    <property type="entry name" value="MenG_UbiE_methyltr"/>
    <property type="match status" value="1"/>
</dbReference>
<dbReference type="InterPro" id="IPR029063">
    <property type="entry name" value="SAM-dependent_MTases_sf"/>
</dbReference>
<dbReference type="InterPro" id="IPR004033">
    <property type="entry name" value="UbiE/COQ5_MeTrFase"/>
</dbReference>
<dbReference type="InterPro" id="IPR023576">
    <property type="entry name" value="UbiE/COQ5_MeTrFase_CS"/>
</dbReference>
<dbReference type="NCBIfam" id="TIGR01934">
    <property type="entry name" value="MenG_MenH_UbiE"/>
    <property type="match status" value="1"/>
</dbReference>
<dbReference type="NCBIfam" id="NF001244">
    <property type="entry name" value="PRK00216.1-5"/>
    <property type="match status" value="1"/>
</dbReference>
<dbReference type="PANTHER" id="PTHR43591:SF24">
    <property type="entry name" value="2-METHOXY-6-POLYPRENYL-1,4-BENZOQUINOL METHYLASE, MITOCHONDRIAL"/>
    <property type="match status" value="1"/>
</dbReference>
<dbReference type="PANTHER" id="PTHR43591">
    <property type="entry name" value="METHYLTRANSFERASE"/>
    <property type="match status" value="1"/>
</dbReference>
<dbReference type="Pfam" id="PF01209">
    <property type="entry name" value="Ubie_methyltran"/>
    <property type="match status" value="1"/>
</dbReference>
<dbReference type="SUPFAM" id="SSF53335">
    <property type="entry name" value="S-adenosyl-L-methionine-dependent methyltransferases"/>
    <property type="match status" value="1"/>
</dbReference>
<dbReference type="PROSITE" id="PS51608">
    <property type="entry name" value="SAM_MT_UBIE"/>
    <property type="match status" value="1"/>
</dbReference>
<dbReference type="PROSITE" id="PS01183">
    <property type="entry name" value="UBIE_1"/>
    <property type="match status" value="1"/>
</dbReference>
<dbReference type="PROSITE" id="PS01184">
    <property type="entry name" value="UBIE_2"/>
    <property type="match status" value="1"/>
</dbReference>
<evidence type="ECO:0000255" key="1">
    <source>
        <dbReference type="HAMAP-Rule" id="MF_01813"/>
    </source>
</evidence>
<evidence type="ECO:0000305" key="2"/>
<proteinExistence type="inferred from homology"/>
<name>MENG_CHLMU</name>
<protein>
    <recommendedName>
        <fullName evidence="1">Demethylmenaquinone methyltransferase</fullName>
        <ecNumber evidence="1">2.1.1.163</ecNumber>
    </recommendedName>
</protein>
<sequence length="229" mass="25939">MTNFQDKPNIRIMFDSLAPTYDKINKILSLGLHLTWNHSFVSLLGRSDHLLDLCAGTGHVALSYIQKYPQASATLVDFSTKMLENVQECHPLAPFSYVISDVTSMPLPNDTFHLASMAYGLRNLSSPLEALKEVHRVLKPKGRLGILELTRPATYNPVHLLHKLYLNLVVPSVGRFYSGNSYAYSYLKESIRNLPCDTSLERVFHKSGLHIIRKRKLLFGTATIWILEK</sequence>